<gene>
    <name evidence="6" type="primary">CotH2</name>
    <name evidence="10" type="ORF">RO3G_08029</name>
</gene>
<protein>
    <recommendedName>
        <fullName evidence="6">Invasin CotH2</fullName>
    </recommendedName>
    <alternativeName>
        <fullName evidence="6">Spore coat protein homolog 2</fullName>
    </alternativeName>
</protein>
<feature type="signal peptide" evidence="1">
    <location>
        <begin position="1"/>
        <end position="19"/>
    </location>
</feature>
<feature type="chain" id="PRO_5003637889" description="Invasin CotH2" evidence="1">
    <location>
        <begin position="20"/>
        <end position="594"/>
    </location>
</feature>
<feature type="propeptide" id="PRO_0000453693" description="Removed in mature form" evidence="1">
    <location>
        <begin position="572"/>
        <end position="594"/>
    </location>
</feature>
<feature type="region of interest" description="Disordered" evidence="3">
    <location>
        <begin position="529"/>
        <end position="565"/>
    </location>
</feature>
<feature type="compositionally biased region" description="Polar residues" evidence="3">
    <location>
        <begin position="534"/>
        <end position="547"/>
    </location>
</feature>
<feature type="compositionally biased region" description="Low complexity" evidence="3">
    <location>
        <begin position="548"/>
        <end position="565"/>
    </location>
</feature>
<feature type="lipid moiety-binding region" description="GPI-anchor amidated serine" evidence="1">
    <location>
        <position position="571"/>
    </location>
</feature>
<feature type="glycosylation site" description="N-linked (GlcNAc...) asparagine" evidence="2">
    <location>
        <position position="77"/>
    </location>
</feature>
<feature type="glycosylation site" description="N-linked (GlcNAc...) asparagine" evidence="2">
    <location>
        <position position="162"/>
    </location>
</feature>
<feature type="glycosylation site" description="N-linked (GlcNAc...) asparagine" evidence="2">
    <location>
        <position position="226"/>
    </location>
</feature>
<feature type="glycosylation site" description="N-linked (GlcNAc...) asparagine" evidence="2">
    <location>
        <position position="316"/>
    </location>
</feature>
<feature type="glycosylation site" description="N-linked (GlcNAc...) asparagine" evidence="2">
    <location>
        <position position="441"/>
    </location>
</feature>
<feature type="glycosylation site" description="N-linked (GlcNAc...) asparagine" evidence="2">
    <location>
        <position position="519"/>
    </location>
</feature>
<feature type="glycosylation site" description="N-linked (GlcNAc...) asparagine" evidence="2">
    <location>
        <position position="533"/>
    </location>
</feature>
<name>COTH2_RHIO9</name>
<sequence length="594" mass="65254">MKLSLTIVSSSFLVAIAHAASVQFNLIAPSATDVKVSVNGQQVALTASDPNVPYFTGSAEVGGTEESFERSLAGITNSTFNDFYNRPVTYANLPQLPWPIENDPQWTRKGKKAEIFDDNYIPSVFFHGDDSQVQDLVKNVPKDKVTGTLTFIGSNYVHSFANVSFGIHGAGKKHNNAKQSWKWTLSGTDTMGNRNHFKLRHMEEDPTQIRERLYADILHAMGTYANETTMVRLFINGQGFGTFNMLDDITEFSYINAMFYGGNPPATLGPLFDGASGADFIYHPGNLDGYSSWKPNKDNANGEGYEAFDPLCKAWNETDYTDNTAIANFEKMFDTEHFLRFMVIEYLTAHWDGYWMGQTNDGAYRDPSDNNKWYFLDQDFDATFGVNLDVPENKDFISVSYKDFPSRYPAGVMANGLLQNADKKAKFEQYLTETVRVLFNNVTLTNRVLAIHNFLSPDLEWDRSIVQQSPGTNFGWTFEQTSQNLWQGVSAPNNNGGGAEWGLVEYIAAKSQAMAKEFNITIVSEPVGPPAANGTATSTNDGGNTHTAAGESKPASSSESSGSKIASQSVSGASRSAVSTVLLGVTALVATAIF</sequence>
<dbReference type="EMBL" id="CH476737">
    <property type="protein sequence ID" value="EIE83324.1"/>
    <property type="molecule type" value="Genomic_DNA"/>
</dbReference>
<dbReference type="SMR" id="I1C4E4"/>
<dbReference type="STRING" id="246409.I1C4E4"/>
<dbReference type="GlyCosmos" id="I1C4E4">
    <property type="glycosylation" value="7 sites, No reported glycans"/>
</dbReference>
<dbReference type="VEuPathDB" id="FungiDB:RO3G_08029"/>
<dbReference type="eggNOG" id="ENOG502SKY8">
    <property type="taxonomic scope" value="Eukaryota"/>
</dbReference>
<dbReference type="InParanoid" id="I1C4E4"/>
<dbReference type="OMA" id="EWFDINT"/>
<dbReference type="OrthoDB" id="71680at4827"/>
<dbReference type="PHI-base" id="PHI:4142"/>
<dbReference type="Proteomes" id="UP000009138">
    <property type="component" value="Unassembled WGS sequence"/>
</dbReference>
<dbReference type="GO" id="GO:0005886">
    <property type="term" value="C:plasma membrane"/>
    <property type="evidence" value="ECO:0007669"/>
    <property type="project" value="UniProtKB-SubCell"/>
</dbReference>
<dbReference type="GO" id="GO:0098552">
    <property type="term" value="C:side of membrane"/>
    <property type="evidence" value="ECO:0007669"/>
    <property type="project" value="UniProtKB-KW"/>
</dbReference>
<dbReference type="GO" id="GO:0046789">
    <property type="term" value="F:host cell surface receptor binding"/>
    <property type="evidence" value="ECO:0000314"/>
    <property type="project" value="UniProtKB"/>
</dbReference>
<dbReference type="GO" id="GO:0044652">
    <property type="term" value="P:adhesion of symbiont to host endothelial cell"/>
    <property type="evidence" value="ECO:0000314"/>
    <property type="project" value="UniProtKB"/>
</dbReference>
<dbReference type="GO" id="GO:0044409">
    <property type="term" value="P:symbiont entry into host"/>
    <property type="evidence" value="ECO:0000315"/>
    <property type="project" value="UniProtKB"/>
</dbReference>
<dbReference type="InterPro" id="IPR014867">
    <property type="entry name" value="Spore_coat_CotH_CotH2/3/7"/>
</dbReference>
<dbReference type="PANTHER" id="PTHR40050">
    <property type="entry name" value="INNER SPORE COAT PROTEIN H"/>
    <property type="match status" value="1"/>
</dbReference>
<dbReference type="PANTHER" id="PTHR40050:SF1">
    <property type="entry name" value="INNER SPORE COAT PROTEIN H"/>
    <property type="match status" value="1"/>
</dbReference>
<dbReference type="Pfam" id="PF08757">
    <property type="entry name" value="CotH"/>
    <property type="match status" value="1"/>
</dbReference>
<comment type="function">
    <text evidence="4">Promotes invasion of host epithelial cells by adhering to receptors on the host cell surface to facilitate endocytosis of the pathogen into host cells (PubMed:24355926). Binds HSPA5/BiP protein on the cell surface of host epithelial cells (PubMed:24355926).</text>
</comment>
<comment type="subunit">
    <text evidence="4">Interacts with host epithelial cell surface HSPA5/BiP protein.</text>
</comment>
<comment type="subcellular location">
    <subcellularLocation>
        <location evidence="4">Cell membrane</location>
        <topology evidence="1">Lipid-anchor</topology>
        <topology evidence="1">GPI-anchor</topology>
    </subcellularLocation>
</comment>
<comment type="developmental stage">
    <text evidence="4">Expressed in spores.</text>
</comment>
<comment type="induction">
    <text evidence="4 5">Expressed during growth in host lung and brain, and during growth in presence of epithelial cells (PubMed:24355926). Induced in presence of high free iron (at protein level) (PubMed:27159390). Induced during growth in high glucose (at protein level) (PubMed:27159390). Induced in presence of 3-hydroxybutyric acid (BHB) (at protein level) (PubMed:27159390).</text>
</comment>
<comment type="disruption phenotype">
    <text evidence="4 5">Simultaneous RNAi-mediated knockdown of CotH2 and CotH3 decreases invasion of host epithelial cells (PubMed:24355926). Simultaneous RNAi-mediated knockdown of CotH2 and CotH3 decreases virulence in a mouse model of ketoacidosis (PubMed:24355926, PubMed:27159390). Simultaneous RNAi-mediated knockdown of CotH2 and CotH3 does not lead to sensitivity to cell wall stress (induced by Congo Red, Calcofluor White, hydrogen peroxide, sodium dodecyl sulfate, or Triton X-100) (PubMed:24355926).</text>
</comment>
<comment type="biotechnology">
    <text evidence="8 9">Antibodies against CotH2 protects mice from mucormycosis, and thus could potentially be used to treat the disease.</text>
</comment>
<reference evidence="11" key="1">
    <citation type="journal article" date="2009" name="PLoS Genet.">
        <title>Genomic analysis of the basal lineage fungus Rhizopus oryzae reveals a whole-genome duplication.</title>
        <authorList>
            <person name="Ma L.-J."/>
            <person name="Ibrahim A.S."/>
            <person name="Skory C."/>
            <person name="Grabherr M.G."/>
            <person name="Burger G."/>
            <person name="Butler M."/>
            <person name="Elias M."/>
            <person name="Idnurm A."/>
            <person name="Lang B.F."/>
            <person name="Sone T."/>
            <person name="Abe A."/>
            <person name="Calvo S.E."/>
            <person name="Corrochano L.M."/>
            <person name="Engels R."/>
            <person name="Fu J."/>
            <person name="Hansberg W."/>
            <person name="Kim J.-M."/>
            <person name="Kodira C.D."/>
            <person name="Koehrsen M.J."/>
            <person name="Liu B."/>
            <person name="Miranda-Saavedra D."/>
            <person name="O'Leary S."/>
            <person name="Ortiz-Castellanos L."/>
            <person name="Poulter R."/>
            <person name="Rodriguez-Romero J."/>
            <person name="Ruiz-Herrera J."/>
            <person name="Shen Y.-Q."/>
            <person name="Zeng Q."/>
            <person name="Galagan J."/>
            <person name="Birren B.W."/>
            <person name="Cuomo C.A."/>
            <person name="Wickes B.L."/>
        </authorList>
    </citation>
    <scope>NUCLEOTIDE SEQUENCE [LARGE SCALE GENOMIC DNA]</scope>
    <source>
        <strain evidence="11">RA 99-880 / ATCC MYA-4621 / FGSC 9543 / NRRL 43880</strain>
    </source>
</reference>
<reference evidence="7" key="2">
    <citation type="journal article" date="2014" name="J. Clin. Invest.">
        <title>CotH3 mediates fungal invasion of host cells during mucormycosis.</title>
        <authorList>
            <person name="Gebremariam T."/>
            <person name="Liu M."/>
            <person name="Luo G."/>
            <person name="Bruno V."/>
            <person name="Phan Q.T."/>
            <person name="Waring A.J."/>
            <person name="Edwards J.E. Jr."/>
            <person name="Filler S.G."/>
            <person name="Yeaman M.R."/>
            <person name="Ibrahim A.S."/>
        </authorList>
    </citation>
    <scope>FUNCTION</scope>
    <scope>INTERACTION WITH HOST HSPA5/BIP</scope>
    <scope>SUBCELLULAR LOCATION</scope>
    <scope>DEVELOPMENTAL STAGE</scope>
    <scope>INDUCTION</scope>
    <scope>DISRUPTION PHENOTYPE</scope>
    <scope>BIOTECHNOLOGY</scope>
</reference>
<reference evidence="7" key="3">
    <citation type="journal article" date="2016" name="J. Clin. Invest.">
        <title>Bicarbonate correction of ketoacidosis alters host-pathogen interactions and alleviates mucormycosis.</title>
        <authorList>
            <person name="Gebremariam T."/>
            <person name="Lin L."/>
            <person name="Liu M."/>
            <person name="Kontoyiannis D.P."/>
            <person name="French S."/>
            <person name="Edwards J.E. Jr."/>
            <person name="Filler S.G."/>
            <person name="Ibrahim A.S."/>
        </authorList>
    </citation>
    <scope>INDUCTION</scope>
    <scope>DISRUPTION PHENOTYPE</scope>
</reference>
<reference evidence="7" key="4">
    <citation type="journal article" date="2019" name="Sci. Adv.">
        <title>Anti-CotH3 antibodies protect mice from mucormycosis by prevention of invasion and augmenting opsonophagocytosis.</title>
        <authorList>
            <person name="Gebremariam T."/>
            <person name="Alkhazraji S."/>
            <person name="Soliman S.S.M."/>
            <person name="Gu Y."/>
            <person name="Jeon H.H."/>
            <person name="Zhang L."/>
            <person name="French S.W."/>
            <person name="Stevens D.A."/>
            <person name="Edwards J.E. Jr."/>
            <person name="Filler S.G."/>
            <person name="Uppuluri P."/>
            <person name="Ibrahim A.S."/>
        </authorList>
    </citation>
    <scope>BIOTECHNOLOGY</scope>
</reference>
<keyword id="KW-1003">Cell membrane</keyword>
<keyword id="KW-0325">Glycoprotein</keyword>
<keyword id="KW-0336">GPI-anchor</keyword>
<keyword id="KW-0449">Lipoprotein</keyword>
<keyword id="KW-0472">Membrane</keyword>
<keyword id="KW-1185">Reference proteome</keyword>
<keyword id="KW-0732">Signal</keyword>
<keyword id="KW-0843">Virulence</keyword>
<proteinExistence type="evidence at protein level"/>
<accession>I1C4E4</accession>
<evidence type="ECO:0000255" key="1"/>
<evidence type="ECO:0000255" key="2">
    <source>
        <dbReference type="PROSITE-ProRule" id="PRU00498"/>
    </source>
</evidence>
<evidence type="ECO:0000256" key="3">
    <source>
        <dbReference type="SAM" id="MobiDB-lite"/>
    </source>
</evidence>
<evidence type="ECO:0000269" key="4">
    <source>
    </source>
</evidence>
<evidence type="ECO:0000269" key="5">
    <source>
    </source>
</evidence>
<evidence type="ECO:0000303" key="6">
    <source>
    </source>
</evidence>
<evidence type="ECO:0000305" key="7"/>
<evidence type="ECO:0000305" key="8">
    <source>
    </source>
</evidence>
<evidence type="ECO:0000305" key="9">
    <source>
    </source>
</evidence>
<evidence type="ECO:0000312" key="10">
    <source>
        <dbReference type="EMBL" id="EIE83324.1"/>
    </source>
</evidence>
<evidence type="ECO:0000312" key="11">
    <source>
        <dbReference type="Proteomes" id="UP000009138"/>
    </source>
</evidence>
<organism evidence="11">
    <name type="scientific">Rhizopus delemar (strain RA 99-880 / ATCC MYA-4621 / FGSC 9543 / NRRL 43880)</name>
    <name type="common">Mucormycosis agent</name>
    <name type="synonym">Rhizopus arrhizus var. delemar</name>
    <dbReference type="NCBI Taxonomy" id="246409"/>
    <lineage>
        <taxon>Eukaryota</taxon>
        <taxon>Fungi</taxon>
        <taxon>Fungi incertae sedis</taxon>
        <taxon>Mucoromycota</taxon>
        <taxon>Mucoromycotina</taxon>
        <taxon>Mucoromycetes</taxon>
        <taxon>Mucorales</taxon>
        <taxon>Mucorineae</taxon>
        <taxon>Rhizopodaceae</taxon>
        <taxon>Rhizopus</taxon>
    </lineage>
</organism>